<gene>
    <name evidence="1" type="primary">leuA</name>
    <name type="ordered locus">Avin_40120</name>
</gene>
<name>LEU1_AZOVD</name>
<organism>
    <name type="scientific">Azotobacter vinelandii (strain DJ / ATCC BAA-1303)</name>
    <dbReference type="NCBI Taxonomy" id="322710"/>
    <lineage>
        <taxon>Bacteria</taxon>
        <taxon>Pseudomonadati</taxon>
        <taxon>Pseudomonadota</taxon>
        <taxon>Gammaproteobacteria</taxon>
        <taxon>Pseudomonadales</taxon>
        <taxon>Pseudomonadaceae</taxon>
        <taxon>Azotobacter</taxon>
    </lineage>
</organism>
<evidence type="ECO:0000255" key="1">
    <source>
        <dbReference type="HAMAP-Rule" id="MF_00572"/>
    </source>
</evidence>
<keyword id="KW-0028">Amino-acid biosynthesis</keyword>
<keyword id="KW-0100">Branched-chain amino acid biosynthesis</keyword>
<keyword id="KW-0963">Cytoplasm</keyword>
<keyword id="KW-0432">Leucine biosynthesis</keyword>
<keyword id="KW-0460">Magnesium</keyword>
<keyword id="KW-0479">Metal-binding</keyword>
<keyword id="KW-0808">Transferase</keyword>
<feature type="chain" id="PRO_1000212088" description="2-isopropylmalate synthase">
    <location>
        <begin position="1"/>
        <end position="557"/>
    </location>
</feature>
<feature type="domain" description="Pyruvate carboxyltransferase" evidence="1">
    <location>
        <begin position="33"/>
        <end position="307"/>
    </location>
</feature>
<feature type="region of interest" description="Regulatory domain" evidence="1">
    <location>
        <begin position="439"/>
        <end position="557"/>
    </location>
</feature>
<feature type="binding site" evidence="1">
    <location>
        <position position="42"/>
    </location>
    <ligand>
        <name>Mg(2+)</name>
        <dbReference type="ChEBI" id="CHEBI:18420"/>
    </ligand>
</feature>
<feature type="binding site" evidence="1">
    <location>
        <position position="246"/>
    </location>
    <ligand>
        <name>Mg(2+)</name>
        <dbReference type="ChEBI" id="CHEBI:18420"/>
    </ligand>
</feature>
<feature type="binding site" evidence="1">
    <location>
        <position position="248"/>
    </location>
    <ligand>
        <name>Mg(2+)</name>
        <dbReference type="ChEBI" id="CHEBI:18420"/>
    </ligand>
</feature>
<feature type="binding site" evidence="1">
    <location>
        <position position="282"/>
    </location>
    <ligand>
        <name>Mg(2+)</name>
        <dbReference type="ChEBI" id="CHEBI:18420"/>
    </ligand>
</feature>
<sequence length="557" mass="61761">MPMLKDPSQKYRPFAPIALRDRTWPDRVIDKAPLWLSTDLRDGNQSLIEPMDAAKKMRFFKTLVQVGLKEIEVGFPSASQTDFDFVRELIEGGHIPDDVTIQVLTQARDDLIERTFESLKGAKKAIVHYYNACAPSFRRIVFDQDKEGVKRIAVAAGRTIKRLAAAAPETRWGFEYSPEVFSSTESDFAVEVCNAVVEVFQPTPANRLILNLPATIECATPNHYADQIEWFCRHVDRRDSVIVSLHTHNDRGTGVAASELGLMAGADRVEGCLFGNGERTGNVDLVTLALNLYTQGVDPGLDFSDIDAVRKVVEECNQLPVHPRHPYVGDLVHTAFSGSHQDAIRKGFAQQDPEGVWEVPYLPIDPADIGRSYEAVIRVNSQSGKGGIAYLLEQEYGISLPRRMQIEFSQVVQKETDRLGLEMSAAQIHALLEAEYLRAETPYALKGHRLQEENGTCALDVEVFDKGESRHWRGIGKGPLEALVACLPVRVEIMDYHEHAIGAGSHARAAAYIELRLDGQRSLHGLGIDENLTTASIRALFSALNRALGQQASIRAA</sequence>
<dbReference type="EC" id="2.3.3.13" evidence="1"/>
<dbReference type="EMBL" id="CP001157">
    <property type="protein sequence ID" value="ACO80148.1"/>
    <property type="molecule type" value="Genomic_DNA"/>
</dbReference>
<dbReference type="RefSeq" id="WP_012702523.1">
    <property type="nucleotide sequence ID" value="NC_012560.1"/>
</dbReference>
<dbReference type="SMR" id="C1DE40"/>
<dbReference type="STRING" id="322710.Avin_40120"/>
<dbReference type="EnsemblBacteria" id="ACO80148">
    <property type="protein sequence ID" value="ACO80148"/>
    <property type="gene ID" value="Avin_40120"/>
</dbReference>
<dbReference type="GeneID" id="88186958"/>
<dbReference type="KEGG" id="avn:Avin_40120"/>
<dbReference type="eggNOG" id="COG0119">
    <property type="taxonomic scope" value="Bacteria"/>
</dbReference>
<dbReference type="HOGENOM" id="CLU_004588_3_0_6"/>
<dbReference type="OrthoDB" id="9803573at2"/>
<dbReference type="UniPathway" id="UPA00048">
    <property type="reaction ID" value="UER00070"/>
</dbReference>
<dbReference type="Proteomes" id="UP000002424">
    <property type="component" value="Chromosome"/>
</dbReference>
<dbReference type="GO" id="GO:0005737">
    <property type="term" value="C:cytoplasm"/>
    <property type="evidence" value="ECO:0007669"/>
    <property type="project" value="UniProtKB-SubCell"/>
</dbReference>
<dbReference type="GO" id="GO:0003852">
    <property type="term" value="F:2-isopropylmalate synthase activity"/>
    <property type="evidence" value="ECO:0007669"/>
    <property type="project" value="UniProtKB-UniRule"/>
</dbReference>
<dbReference type="GO" id="GO:0003985">
    <property type="term" value="F:acetyl-CoA C-acetyltransferase activity"/>
    <property type="evidence" value="ECO:0007669"/>
    <property type="project" value="UniProtKB-UniRule"/>
</dbReference>
<dbReference type="GO" id="GO:0000287">
    <property type="term" value="F:magnesium ion binding"/>
    <property type="evidence" value="ECO:0007669"/>
    <property type="project" value="UniProtKB-UniRule"/>
</dbReference>
<dbReference type="GO" id="GO:0009098">
    <property type="term" value="P:L-leucine biosynthetic process"/>
    <property type="evidence" value="ECO:0007669"/>
    <property type="project" value="UniProtKB-UniRule"/>
</dbReference>
<dbReference type="CDD" id="cd07942">
    <property type="entry name" value="DRE_TIM_LeuA"/>
    <property type="match status" value="1"/>
</dbReference>
<dbReference type="FunFam" id="3.20.20.70:FF:000045">
    <property type="entry name" value="2-isopropylmalate synthase"/>
    <property type="match status" value="1"/>
</dbReference>
<dbReference type="Gene3D" id="3.30.160.270">
    <property type="match status" value="1"/>
</dbReference>
<dbReference type="Gene3D" id="3.20.20.70">
    <property type="entry name" value="Aldolase class I"/>
    <property type="match status" value="1"/>
</dbReference>
<dbReference type="HAMAP" id="MF_00572">
    <property type="entry name" value="LeuA_type2"/>
    <property type="match status" value="1"/>
</dbReference>
<dbReference type="InterPro" id="IPR013709">
    <property type="entry name" value="2-isopropylmalate_synth_dimer"/>
</dbReference>
<dbReference type="InterPro" id="IPR002034">
    <property type="entry name" value="AIPM/Hcit_synth_CS"/>
</dbReference>
<dbReference type="InterPro" id="IPR013785">
    <property type="entry name" value="Aldolase_TIM"/>
</dbReference>
<dbReference type="InterPro" id="IPR005668">
    <property type="entry name" value="IPM_Synthase"/>
</dbReference>
<dbReference type="InterPro" id="IPR054692">
    <property type="entry name" value="LeuA-like_post-cat"/>
</dbReference>
<dbReference type="InterPro" id="IPR036230">
    <property type="entry name" value="LeuA_allosteric_dom_sf"/>
</dbReference>
<dbReference type="InterPro" id="IPR039371">
    <property type="entry name" value="LeuA_N_DRE-TIM"/>
</dbReference>
<dbReference type="InterPro" id="IPR000891">
    <property type="entry name" value="PYR_CT"/>
</dbReference>
<dbReference type="NCBIfam" id="TIGR00970">
    <property type="entry name" value="leuA_yeast"/>
    <property type="match status" value="1"/>
</dbReference>
<dbReference type="NCBIfam" id="NF002991">
    <property type="entry name" value="PRK03739.1"/>
    <property type="match status" value="1"/>
</dbReference>
<dbReference type="PANTHER" id="PTHR46911">
    <property type="match status" value="1"/>
</dbReference>
<dbReference type="PANTHER" id="PTHR46911:SF1">
    <property type="entry name" value="2-ISOPROPYLMALATE SYNTHASE"/>
    <property type="match status" value="1"/>
</dbReference>
<dbReference type="Pfam" id="PF00682">
    <property type="entry name" value="HMGL-like"/>
    <property type="match status" value="1"/>
</dbReference>
<dbReference type="Pfam" id="PF22615">
    <property type="entry name" value="IPMS_D2"/>
    <property type="match status" value="1"/>
</dbReference>
<dbReference type="Pfam" id="PF08502">
    <property type="entry name" value="LeuA_dimer"/>
    <property type="match status" value="1"/>
</dbReference>
<dbReference type="SMART" id="SM00917">
    <property type="entry name" value="LeuA_dimer"/>
    <property type="match status" value="1"/>
</dbReference>
<dbReference type="SUPFAM" id="SSF110921">
    <property type="entry name" value="2-isopropylmalate synthase LeuA, allosteric (dimerisation) domain"/>
    <property type="match status" value="1"/>
</dbReference>
<dbReference type="SUPFAM" id="SSF51569">
    <property type="entry name" value="Aldolase"/>
    <property type="match status" value="1"/>
</dbReference>
<dbReference type="SUPFAM" id="SSF89000">
    <property type="entry name" value="post-HMGL domain-like"/>
    <property type="match status" value="1"/>
</dbReference>
<dbReference type="PROSITE" id="PS00815">
    <property type="entry name" value="AIPM_HOMOCIT_SYNTH_1"/>
    <property type="match status" value="1"/>
</dbReference>
<dbReference type="PROSITE" id="PS00816">
    <property type="entry name" value="AIPM_HOMOCIT_SYNTH_2"/>
    <property type="match status" value="1"/>
</dbReference>
<dbReference type="PROSITE" id="PS50991">
    <property type="entry name" value="PYR_CT"/>
    <property type="match status" value="1"/>
</dbReference>
<comment type="function">
    <text evidence="1">Catalyzes the condensation of the acetyl group of acetyl-CoA with 3-methyl-2-oxobutanoate (2-ketoisovalerate) to form 3-carboxy-3-hydroxy-4-methylpentanoate (2-isopropylmalate).</text>
</comment>
<comment type="catalytic activity">
    <reaction evidence="1">
        <text>3-methyl-2-oxobutanoate + acetyl-CoA + H2O = (2S)-2-isopropylmalate + CoA + H(+)</text>
        <dbReference type="Rhea" id="RHEA:21524"/>
        <dbReference type="ChEBI" id="CHEBI:1178"/>
        <dbReference type="ChEBI" id="CHEBI:11851"/>
        <dbReference type="ChEBI" id="CHEBI:15377"/>
        <dbReference type="ChEBI" id="CHEBI:15378"/>
        <dbReference type="ChEBI" id="CHEBI:57287"/>
        <dbReference type="ChEBI" id="CHEBI:57288"/>
        <dbReference type="EC" id="2.3.3.13"/>
    </reaction>
</comment>
<comment type="cofactor">
    <cofactor evidence="1">
        <name>Mg(2+)</name>
        <dbReference type="ChEBI" id="CHEBI:18420"/>
    </cofactor>
</comment>
<comment type="pathway">
    <text evidence="1">Amino-acid biosynthesis; L-leucine biosynthesis; L-leucine from 3-methyl-2-oxobutanoate: step 1/4.</text>
</comment>
<comment type="subunit">
    <text evidence="1">Homodimer.</text>
</comment>
<comment type="subcellular location">
    <subcellularLocation>
        <location evidence="1">Cytoplasm</location>
    </subcellularLocation>
</comment>
<comment type="similarity">
    <text evidence="1">Belongs to the alpha-IPM synthase/homocitrate synthase family. LeuA type 2 subfamily.</text>
</comment>
<proteinExistence type="inferred from homology"/>
<reference key="1">
    <citation type="journal article" date="2009" name="J. Bacteriol.">
        <title>Genome sequence of Azotobacter vinelandii, an obligate aerobe specialized to support diverse anaerobic metabolic processes.</title>
        <authorList>
            <person name="Setubal J.C."/>
            <person name="Dos Santos P."/>
            <person name="Goldman B.S."/>
            <person name="Ertesvaag H."/>
            <person name="Espin G."/>
            <person name="Rubio L.M."/>
            <person name="Valla S."/>
            <person name="Almeida N.F."/>
            <person name="Balasubramanian D."/>
            <person name="Cromes L."/>
            <person name="Curatti L."/>
            <person name="Du Z."/>
            <person name="Godsy E."/>
            <person name="Goodner B."/>
            <person name="Hellner-Burris K."/>
            <person name="Hernandez J.A."/>
            <person name="Houmiel K."/>
            <person name="Imperial J."/>
            <person name="Kennedy C."/>
            <person name="Larson T.J."/>
            <person name="Latreille P."/>
            <person name="Ligon L.S."/>
            <person name="Lu J."/>
            <person name="Maerk M."/>
            <person name="Miller N.M."/>
            <person name="Norton S."/>
            <person name="O'Carroll I.P."/>
            <person name="Paulsen I."/>
            <person name="Raulfs E.C."/>
            <person name="Roemer R."/>
            <person name="Rosser J."/>
            <person name="Segura D."/>
            <person name="Slater S."/>
            <person name="Stricklin S.L."/>
            <person name="Studholme D.J."/>
            <person name="Sun J."/>
            <person name="Viana C.J."/>
            <person name="Wallin E."/>
            <person name="Wang B."/>
            <person name="Wheeler C."/>
            <person name="Zhu H."/>
            <person name="Dean D.R."/>
            <person name="Dixon R."/>
            <person name="Wood D."/>
        </authorList>
    </citation>
    <scope>NUCLEOTIDE SEQUENCE [LARGE SCALE GENOMIC DNA]</scope>
    <source>
        <strain>DJ / ATCC BAA-1303</strain>
    </source>
</reference>
<protein>
    <recommendedName>
        <fullName evidence="1">2-isopropylmalate synthase</fullName>
        <ecNumber evidence="1">2.3.3.13</ecNumber>
    </recommendedName>
    <alternativeName>
        <fullName evidence="1">Alpha-IPM synthase</fullName>
    </alternativeName>
    <alternativeName>
        <fullName evidence="1">Alpha-isopropylmalate synthase</fullName>
    </alternativeName>
</protein>
<accession>C1DE40</accession>